<protein>
    <recommendedName>
        <fullName evidence="1">4-hydroxythreonine-4-phosphate dehydrogenase</fullName>
        <ecNumber evidence="1">1.1.1.262</ecNumber>
    </recommendedName>
    <alternativeName>
        <fullName evidence="1">4-(phosphohydroxy)-L-threonine dehydrogenase</fullName>
    </alternativeName>
</protein>
<feature type="chain" id="PRO_1000051524" description="4-hydroxythreonine-4-phosphate dehydrogenase">
    <location>
        <begin position="1"/>
        <end position="307"/>
    </location>
</feature>
<feature type="binding site" evidence="1">
    <location>
        <position position="121"/>
    </location>
    <ligand>
        <name>substrate</name>
    </ligand>
</feature>
<feature type="binding site" evidence="1">
    <location>
        <position position="122"/>
    </location>
    <ligand>
        <name>substrate</name>
    </ligand>
</feature>
<feature type="binding site" evidence="1">
    <location>
        <position position="150"/>
    </location>
    <ligand>
        <name>a divalent metal cation</name>
        <dbReference type="ChEBI" id="CHEBI:60240"/>
        <note>ligand shared between dimeric partners</note>
    </ligand>
</feature>
<feature type="binding site" evidence="1">
    <location>
        <position position="189"/>
    </location>
    <ligand>
        <name>a divalent metal cation</name>
        <dbReference type="ChEBI" id="CHEBI:60240"/>
        <note>ligand shared between dimeric partners</note>
    </ligand>
</feature>
<feature type="binding site" evidence="1">
    <location>
        <position position="245"/>
    </location>
    <ligand>
        <name>a divalent metal cation</name>
        <dbReference type="ChEBI" id="CHEBI:60240"/>
        <note>ligand shared between dimeric partners</note>
    </ligand>
</feature>
<feature type="binding site" evidence="1">
    <location>
        <position position="253"/>
    </location>
    <ligand>
        <name>substrate</name>
    </ligand>
</feature>
<feature type="binding site" evidence="1">
    <location>
        <position position="262"/>
    </location>
    <ligand>
        <name>substrate</name>
    </ligand>
</feature>
<feature type="binding site" evidence="1">
    <location>
        <position position="271"/>
    </location>
    <ligand>
        <name>substrate</name>
    </ligand>
</feature>
<sequence>MSKVRIAISVGDLNGVGIEIAIKAHEEVSKLCAPLYCINSYMLNQASTLLNYKIPSNFEISEVGGEFAVKKGCVDKDSGRYSYDSFIHAISLCEQKKADAVVTMPIHKEAWMLAGLKYKGHTDLLREHFKRDAIMMLGCQKMFVALFSEHIPLKDVASSIKYKKLKQFFLDFNNSVPNERVAVLGLNPHAGDNGVLGNEELIITKAIKSANKKVCFEQFIGPLVPDIAFTPHIREKFKYFIAMYHDQGLAPLKALYFDESINVSLNLPIIRTSVDHGTAFDIAYEKKAKTLSYINAIKSAIALGERL</sequence>
<dbReference type="EC" id="1.1.1.262" evidence="1"/>
<dbReference type="EMBL" id="CP000153">
    <property type="protein sequence ID" value="ABB44173.1"/>
    <property type="molecule type" value="Genomic_DNA"/>
</dbReference>
<dbReference type="RefSeq" id="WP_011372525.1">
    <property type="nucleotide sequence ID" value="NC_007575.1"/>
</dbReference>
<dbReference type="SMR" id="Q30S58"/>
<dbReference type="STRING" id="326298.Suden_0895"/>
<dbReference type="KEGG" id="tdn:Suden_0895"/>
<dbReference type="eggNOG" id="COG1995">
    <property type="taxonomic scope" value="Bacteria"/>
</dbReference>
<dbReference type="HOGENOM" id="CLU_040168_0_0_7"/>
<dbReference type="OrthoDB" id="9801783at2"/>
<dbReference type="UniPathway" id="UPA00244">
    <property type="reaction ID" value="UER00312"/>
</dbReference>
<dbReference type="Proteomes" id="UP000002714">
    <property type="component" value="Chromosome"/>
</dbReference>
<dbReference type="GO" id="GO:0005737">
    <property type="term" value="C:cytoplasm"/>
    <property type="evidence" value="ECO:0007669"/>
    <property type="project" value="UniProtKB-SubCell"/>
</dbReference>
<dbReference type="GO" id="GO:0050570">
    <property type="term" value="F:4-hydroxythreonine-4-phosphate dehydrogenase activity"/>
    <property type="evidence" value="ECO:0007669"/>
    <property type="project" value="UniProtKB-UniRule"/>
</dbReference>
<dbReference type="GO" id="GO:0050897">
    <property type="term" value="F:cobalt ion binding"/>
    <property type="evidence" value="ECO:0007669"/>
    <property type="project" value="UniProtKB-UniRule"/>
</dbReference>
<dbReference type="GO" id="GO:0000287">
    <property type="term" value="F:magnesium ion binding"/>
    <property type="evidence" value="ECO:0007669"/>
    <property type="project" value="UniProtKB-UniRule"/>
</dbReference>
<dbReference type="GO" id="GO:0051287">
    <property type="term" value="F:NAD binding"/>
    <property type="evidence" value="ECO:0007669"/>
    <property type="project" value="InterPro"/>
</dbReference>
<dbReference type="GO" id="GO:0008270">
    <property type="term" value="F:zinc ion binding"/>
    <property type="evidence" value="ECO:0007669"/>
    <property type="project" value="UniProtKB-UniRule"/>
</dbReference>
<dbReference type="GO" id="GO:0042823">
    <property type="term" value="P:pyridoxal phosphate biosynthetic process"/>
    <property type="evidence" value="ECO:0007669"/>
    <property type="project" value="UniProtKB-UniRule"/>
</dbReference>
<dbReference type="GO" id="GO:0008615">
    <property type="term" value="P:pyridoxine biosynthetic process"/>
    <property type="evidence" value="ECO:0007669"/>
    <property type="project" value="UniProtKB-UniRule"/>
</dbReference>
<dbReference type="Gene3D" id="3.40.718.10">
    <property type="entry name" value="Isopropylmalate Dehydrogenase"/>
    <property type="match status" value="1"/>
</dbReference>
<dbReference type="HAMAP" id="MF_02086">
    <property type="entry name" value="PdxA_Epsilonprot"/>
    <property type="match status" value="1"/>
</dbReference>
<dbReference type="InterPro" id="IPR037539">
    <property type="entry name" value="PdxA_epsilonprot"/>
</dbReference>
<dbReference type="InterPro" id="IPR005255">
    <property type="entry name" value="PdxA_fam"/>
</dbReference>
<dbReference type="NCBIfam" id="TIGR00557">
    <property type="entry name" value="pdxA"/>
    <property type="match status" value="1"/>
</dbReference>
<dbReference type="NCBIfam" id="NF003040">
    <property type="entry name" value="PRK03946.1"/>
    <property type="match status" value="1"/>
</dbReference>
<dbReference type="PANTHER" id="PTHR30004">
    <property type="entry name" value="4-HYDROXYTHREONINE-4-PHOSPHATE DEHYDROGENASE"/>
    <property type="match status" value="1"/>
</dbReference>
<dbReference type="PANTHER" id="PTHR30004:SF6">
    <property type="entry name" value="D-THREONATE 4-PHOSPHATE DEHYDROGENASE"/>
    <property type="match status" value="1"/>
</dbReference>
<dbReference type="Pfam" id="PF04166">
    <property type="entry name" value="PdxA"/>
    <property type="match status" value="1"/>
</dbReference>
<dbReference type="SUPFAM" id="SSF53659">
    <property type="entry name" value="Isocitrate/Isopropylmalate dehydrogenase-like"/>
    <property type="match status" value="1"/>
</dbReference>
<comment type="function">
    <text evidence="1">Catalyzes the NAD(P)-dependent oxidation of 4-(phosphooxy)-L-threonine (HTP) into 2-amino-3-oxo-4-(phosphooxy)butyric acid which spontaneously decarboxylates to form 3-amino-2-oxopropyl phosphate (AHAP).</text>
</comment>
<comment type="catalytic activity">
    <reaction evidence="1">
        <text>4-(phosphooxy)-L-threonine + NAD(+) = 3-amino-2-oxopropyl phosphate + CO2 + NADH</text>
        <dbReference type="Rhea" id="RHEA:32275"/>
        <dbReference type="ChEBI" id="CHEBI:16526"/>
        <dbReference type="ChEBI" id="CHEBI:57279"/>
        <dbReference type="ChEBI" id="CHEBI:57540"/>
        <dbReference type="ChEBI" id="CHEBI:57945"/>
        <dbReference type="ChEBI" id="CHEBI:58452"/>
        <dbReference type="EC" id="1.1.1.262"/>
    </reaction>
</comment>
<comment type="cofactor">
    <cofactor evidence="1">
        <name>Zn(2+)</name>
        <dbReference type="ChEBI" id="CHEBI:29105"/>
    </cofactor>
    <cofactor evidence="1">
        <name>Mg(2+)</name>
        <dbReference type="ChEBI" id="CHEBI:18420"/>
    </cofactor>
    <cofactor evidence="1">
        <name>Co(2+)</name>
        <dbReference type="ChEBI" id="CHEBI:48828"/>
    </cofactor>
</comment>
<comment type="pathway">
    <text evidence="1">Cofactor biosynthesis; pyridoxine 5'-phosphate biosynthesis; pyridoxine 5'-phosphate from D-erythrose 4-phosphate: step 4/5.</text>
</comment>
<comment type="subunit">
    <text evidence="1">Homodimer.</text>
</comment>
<comment type="subcellular location">
    <subcellularLocation>
        <location evidence="1">Cytoplasm</location>
    </subcellularLocation>
</comment>
<comment type="miscellaneous">
    <text evidence="1">The active site is located at the dimer interface.</text>
</comment>
<comment type="similarity">
    <text evidence="1">Belongs to the PdxA family.</text>
</comment>
<name>PDXA_SULDN</name>
<keyword id="KW-0170">Cobalt</keyword>
<keyword id="KW-0963">Cytoplasm</keyword>
<keyword id="KW-0460">Magnesium</keyword>
<keyword id="KW-0479">Metal-binding</keyword>
<keyword id="KW-0520">NAD</keyword>
<keyword id="KW-0521">NADP</keyword>
<keyword id="KW-0560">Oxidoreductase</keyword>
<keyword id="KW-0664">Pyridoxine biosynthesis</keyword>
<keyword id="KW-1185">Reference proteome</keyword>
<keyword id="KW-0862">Zinc</keyword>
<reference key="1">
    <citation type="journal article" date="2008" name="Appl. Environ. Microbiol.">
        <title>Genome of the epsilonproteobacterial chemolithoautotroph Sulfurimonas denitrificans.</title>
        <authorList>
            <person name="Sievert S.M."/>
            <person name="Scott K.M."/>
            <person name="Klotz M.G."/>
            <person name="Chain P.S.G."/>
            <person name="Hauser L.J."/>
            <person name="Hemp J."/>
            <person name="Huegler M."/>
            <person name="Land M."/>
            <person name="Lapidus A."/>
            <person name="Larimer F.W."/>
            <person name="Lucas S."/>
            <person name="Malfatti S.A."/>
            <person name="Meyer F."/>
            <person name="Paulsen I.T."/>
            <person name="Ren Q."/>
            <person name="Simon J."/>
            <person name="Bailey K."/>
            <person name="Diaz E."/>
            <person name="Fitzpatrick K.A."/>
            <person name="Glover B."/>
            <person name="Gwatney N."/>
            <person name="Korajkic A."/>
            <person name="Long A."/>
            <person name="Mobberley J.M."/>
            <person name="Pantry S.N."/>
            <person name="Pazder G."/>
            <person name="Peterson S."/>
            <person name="Quintanilla J.D."/>
            <person name="Sprinkle R."/>
            <person name="Stephens J."/>
            <person name="Thomas P."/>
            <person name="Vaughn R."/>
            <person name="Weber M.J."/>
            <person name="Wooten L.L."/>
        </authorList>
    </citation>
    <scope>NUCLEOTIDE SEQUENCE [LARGE SCALE GENOMIC DNA]</scope>
    <source>
        <strain>ATCC 33889 / DSM 1251</strain>
    </source>
</reference>
<proteinExistence type="inferred from homology"/>
<gene>
    <name evidence="1" type="primary">pdxA</name>
    <name type="ordered locus">Suden_0895</name>
</gene>
<accession>Q30S58</accession>
<organism>
    <name type="scientific">Sulfurimonas denitrificans (strain ATCC 33889 / DSM 1251)</name>
    <name type="common">Thiomicrospira denitrificans (strain ATCC 33889 / DSM 1251)</name>
    <dbReference type="NCBI Taxonomy" id="326298"/>
    <lineage>
        <taxon>Bacteria</taxon>
        <taxon>Pseudomonadati</taxon>
        <taxon>Campylobacterota</taxon>
        <taxon>Epsilonproteobacteria</taxon>
        <taxon>Campylobacterales</taxon>
        <taxon>Sulfurimonadaceae</taxon>
        <taxon>Sulfurimonas</taxon>
    </lineage>
</organism>
<evidence type="ECO:0000255" key="1">
    <source>
        <dbReference type="HAMAP-Rule" id="MF_02086"/>
    </source>
</evidence>